<accession>Q5WKC8</accession>
<keyword id="KW-0963">Cytoplasm</keyword>
<keyword id="KW-0479">Metal-binding</keyword>
<keyword id="KW-0520">NAD</keyword>
<keyword id="KW-1185">Reference proteome</keyword>
<keyword id="KW-0808">Transferase</keyword>
<keyword id="KW-0862">Zinc</keyword>
<organism>
    <name type="scientific">Shouchella clausii (strain KSM-K16)</name>
    <name type="common">Alkalihalobacillus clausii</name>
    <dbReference type="NCBI Taxonomy" id="66692"/>
    <lineage>
        <taxon>Bacteria</taxon>
        <taxon>Bacillati</taxon>
        <taxon>Bacillota</taxon>
        <taxon>Bacilli</taxon>
        <taxon>Bacillales</taxon>
        <taxon>Bacillaceae</taxon>
        <taxon>Shouchella</taxon>
    </lineage>
</organism>
<dbReference type="EC" id="2.3.1.286" evidence="1 2"/>
<dbReference type="EMBL" id="AP006627">
    <property type="protein sequence ID" value="BAD63177.1"/>
    <property type="molecule type" value="Genomic_DNA"/>
</dbReference>
<dbReference type="RefSeq" id="WP_011245493.1">
    <property type="nucleotide sequence ID" value="NC_006582.1"/>
</dbReference>
<dbReference type="SMR" id="Q5WKC8"/>
<dbReference type="STRING" id="66692.ABC0638"/>
<dbReference type="KEGG" id="bcl:ABC0638"/>
<dbReference type="eggNOG" id="COG0846">
    <property type="taxonomic scope" value="Bacteria"/>
</dbReference>
<dbReference type="HOGENOM" id="CLU_023643_3_0_9"/>
<dbReference type="OrthoDB" id="9800582at2"/>
<dbReference type="Proteomes" id="UP000001168">
    <property type="component" value="Chromosome"/>
</dbReference>
<dbReference type="GO" id="GO:0005737">
    <property type="term" value="C:cytoplasm"/>
    <property type="evidence" value="ECO:0007669"/>
    <property type="project" value="UniProtKB-SubCell"/>
</dbReference>
<dbReference type="GO" id="GO:0017136">
    <property type="term" value="F:histone deacetylase activity, NAD-dependent"/>
    <property type="evidence" value="ECO:0007669"/>
    <property type="project" value="TreeGrafter"/>
</dbReference>
<dbReference type="GO" id="GO:0070403">
    <property type="term" value="F:NAD+ binding"/>
    <property type="evidence" value="ECO:0007669"/>
    <property type="project" value="UniProtKB-UniRule"/>
</dbReference>
<dbReference type="GO" id="GO:0008270">
    <property type="term" value="F:zinc ion binding"/>
    <property type="evidence" value="ECO:0007669"/>
    <property type="project" value="UniProtKB-UniRule"/>
</dbReference>
<dbReference type="Gene3D" id="3.30.1600.10">
    <property type="entry name" value="SIR2/SIRT2 'Small Domain"/>
    <property type="match status" value="1"/>
</dbReference>
<dbReference type="Gene3D" id="3.40.50.1220">
    <property type="entry name" value="TPP-binding domain"/>
    <property type="match status" value="1"/>
</dbReference>
<dbReference type="HAMAP" id="MF_01968">
    <property type="entry name" value="Sirtuin_ClassU"/>
    <property type="match status" value="1"/>
</dbReference>
<dbReference type="InterPro" id="IPR029035">
    <property type="entry name" value="DHS-like_NAD/FAD-binding_dom"/>
</dbReference>
<dbReference type="InterPro" id="IPR050134">
    <property type="entry name" value="NAD-dep_sirtuin_deacylases"/>
</dbReference>
<dbReference type="InterPro" id="IPR003000">
    <property type="entry name" value="Sirtuin"/>
</dbReference>
<dbReference type="InterPro" id="IPR026591">
    <property type="entry name" value="Sirtuin_cat_small_dom_sf"/>
</dbReference>
<dbReference type="InterPro" id="IPR028628">
    <property type="entry name" value="Sirtuin_class_U"/>
</dbReference>
<dbReference type="InterPro" id="IPR026590">
    <property type="entry name" value="Ssirtuin_cat_dom"/>
</dbReference>
<dbReference type="NCBIfam" id="NF001753">
    <property type="entry name" value="PRK00481.1-3"/>
    <property type="match status" value="1"/>
</dbReference>
<dbReference type="PANTHER" id="PTHR11085">
    <property type="entry name" value="NAD-DEPENDENT PROTEIN DEACYLASE SIRTUIN-5, MITOCHONDRIAL-RELATED"/>
    <property type="match status" value="1"/>
</dbReference>
<dbReference type="PANTHER" id="PTHR11085:SF10">
    <property type="entry name" value="NAD-DEPENDENT PROTEIN DEACYLASE SIRTUIN-5, MITOCHONDRIAL-RELATED"/>
    <property type="match status" value="1"/>
</dbReference>
<dbReference type="Pfam" id="PF02146">
    <property type="entry name" value="SIR2"/>
    <property type="match status" value="1"/>
</dbReference>
<dbReference type="SUPFAM" id="SSF52467">
    <property type="entry name" value="DHS-like NAD/FAD-binding domain"/>
    <property type="match status" value="1"/>
</dbReference>
<dbReference type="PROSITE" id="PS50305">
    <property type="entry name" value="SIRTUIN"/>
    <property type="match status" value="1"/>
</dbReference>
<name>NPD_SHOC1</name>
<gene>
    <name evidence="1" type="primary">cobB</name>
    <name type="ordered locus">ABC0638</name>
</gene>
<sequence length="237" mass="26284">MFTTSLRQAQRIVVFTGAGMSTESGVPDFRSSRGLCKGNNPEALASLQAMNDNREAFVDFYRRRMEQLQHVQPHKGYDVLATWEQQLSVTAIITQNTDGLHERAGNQRVLPLHGSIQKLYCIQCGQHYDVDRYMNNQPSCSCGGFIRPSVVLFGEPLDSNILALAEQHSIEADVFIVLGSSLVVSPANLFPRIAKEHGAKLIIVNHDSTPLDTIADYVVNDKPIGSFLVETNRALQK</sequence>
<proteinExistence type="inferred from homology"/>
<protein>
    <recommendedName>
        <fullName evidence="1">NAD-dependent protein deacetylase</fullName>
        <ecNumber evidence="1 2">2.3.1.286</ecNumber>
    </recommendedName>
    <alternativeName>
        <fullName evidence="1">Regulatory protein SIR2 homolog</fullName>
    </alternativeName>
</protein>
<reference key="1">
    <citation type="submission" date="2003-10" db="EMBL/GenBank/DDBJ databases">
        <title>The complete genome sequence of the alkaliphilic Bacillus clausii KSM-K16.</title>
        <authorList>
            <person name="Takaki Y."/>
            <person name="Kageyama Y."/>
            <person name="Shimamura S."/>
            <person name="Suzuki H."/>
            <person name="Nishi S."/>
            <person name="Hatada Y."/>
            <person name="Kawai S."/>
            <person name="Ito S."/>
            <person name="Horikoshi K."/>
        </authorList>
    </citation>
    <scope>NUCLEOTIDE SEQUENCE [LARGE SCALE GENOMIC DNA]</scope>
    <source>
        <strain>KSM-K16</strain>
    </source>
</reference>
<evidence type="ECO:0000255" key="1">
    <source>
        <dbReference type="HAMAP-Rule" id="MF_01968"/>
    </source>
</evidence>
<evidence type="ECO:0000255" key="2">
    <source>
        <dbReference type="PROSITE-ProRule" id="PRU00236"/>
    </source>
</evidence>
<feature type="chain" id="PRO_0000110293" description="NAD-dependent protein deacetylase">
    <location>
        <begin position="1"/>
        <end position="237"/>
    </location>
</feature>
<feature type="domain" description="Deacetylase sirtuin-type" evidence="2">
    <location>
        <begin position="1"/>
        <end position="237"/>
    </location>
</feature>
<feature type="active site" description="Proton acceptor" evidence="2">
    <location>
        <position position="113"/>
    </location>
</feature>
<feature type="binding site" evidence="1">
    <location>
        <position position="18"/>
    </location>
    <ligand>
        <name>NAD(+)</name>
        <dbReference type="ChEBI" id="CHEBI:57540"/>
    </ligand>
</feature>
<feature type="binding site" evidence="1">
    <location>
        <position position="22"/>
    </location>
    <ligand>
        <name>NAD(+)</name>
        <dbReference type="ChEBI" id="CHEBI:57540"/>
    </ligand>
</feature>
<feature type="binding site" evidence="1">
    <location>
        <position position="29"/>
    </location>
    <ligand>
        <name>NAD(+)</name>
        <dbReference type="ChEBI" id="CHEBI:57540"/>
    </ligand>
</feature>
<feature type="binding site" evidence="1">
    <location>
        <position position="29"/>
    </location>
    <ligand>
        <name>nicotinamide</name>
        <dbReference type="ChEBI" id="CHEBI:17154"/>
    </ligand>
</feature>
<feature type="binding site" evidence="1">
    <location>
        <position position="30"/>
    </location>
    <ligand>
        <name>NAD(+)</name>
        <dbReference type="ChEBI" id="CHEBI:57540"/>
    </ligand>
</feature>
<feature type="binding site" evidence="1">
    <location>
        <position position="95"/>
    </location>
    <ligand>
        <name>NAD(+)</name>
        <dbReference type="ChEBI" id="CHEBI:57540"/>
    </ligand>
</feature>
<feature type="binding site" evidence="1">
    <location>
        <position position="98"/>
    </location>
    <ligand>
        <name>NAD(+)</name>
        <dbReference type="ChEBI" id="CHEBI:57540"/>
    </ligand>
</feature>
<feature type="binding site" evidence="1">
    <location>
        <position position="98"/>
    </location>
    <ligand>
        <name>nicotinamide</name>
        <dbReference type="ChEBI" id="CHEBI:17154"/>
    </ligand>
</feature>
<feature type="binding site" evidence="1">
    <location>
        <position position="113"/>
    </location>
    <ligand>
        <name>NAD(+)</name>
        <dbReference type="ChEBI" id="CHEBI:57540"/>
    </ligand>
</feature>
<feature type="binding site" evidence="1">
    <location>
        <position position="121"/>
    </location>
    <ligand>
        <name>Zn(2+)</name>
        <dbReference type="ChEBI" id="CHEBI:29105"/>
    </ligand>
</feature>
<feature type="binding site" evidence="1">
    <location>
        <position position="124"/>
    </location>
    <ligand>
        <name>Zn(2+)</name>
        <dbReference type="ChEBI" id="CHEBI:29105"/>
    </ligand>
</feature>
<feature type="binding site" evidence="1">
    <location>
        <position position="140"/>
    </location>
    <ligand>
        <name>Zn(2+)</name>
        <dbReference type="ChEBI" id="CHEBI:29105"/>
    </ligand>
</feature>
<feature type="binding site" evidence="1">
    <location>
        <position position="142"/>
    </location>
    <ligand>
        <name>Zn(2+)</name>
        <dbReference type="ChEBI" id="CHEBI:29105"/>
    </ligand>
</feature>
<feature type="binding site" evidence="1">
    <location>
        <position position="180"/>
    </location>
    <ligand>
        <name>NAD(+)</name>
        <dbReference type="ChEBI" id="CHEBI:57540"/>
    </ligand>
</feature>
<feature type="binding site" evidence="1">
    <location>
        <position position="181"/>
    </location>
    <ligand>
        <name>NAD(+)</name>
        <dbReference type="ChEBI" id="CHEBI:57540"/>
    </ligand>
</feature>
<feature type="binding site" evidence="1">
    <location>
        <position position="205"/>
    </location>
    <ligand>
        <name>NAD(+)</name>
        <dbReference type="ChEBI" id="CHEBI:57540"/>
    </ligand>
</feature>
<feature type="binding site" evidence="1">
    <location>
        <position position="224"/>
    </location>
    <ligand>
        <name>NAD(+)</name>
        <dbReference type="ChEBI" id="CHEBI:57540"/>
    </ligand>
</feature>
<comment type="function">
    <text evidence="1">NAD-dependent protein deacetylase which modulates the activities of several enzymes which are inactive in their acetylated form.</text>
</comment>
<comment type="catalytic activity">
    <reaction evidence="1">
        <text>N(6)-acetyl-L-lysyl-[protein] + NAD(+) + H2O = 2''-O-acetyl-ADP-D-ribose + nicotinamide + L-lysyl-[protein]</text>
        <dbReference type="Rhea" id="RHEA:43636"/>
        <dbReference type="Rhea" id="RHEA-COMP:9752"/>
        <dbReference type="Rhea" id="RHEA-COMP:10731"/>
        <dbReference type="ChEBI" id="CHEBI:15377"/>
        <dbReference type="ChEBI" id="CHEBI:17154"/>
        <dbReference type="ChEBI" id="CHEBI:29969"/>
        <dbReference type="ChEBI" id="CHEBI:57540"/>
        <dbReference type="ChEBI" id="CHEBI:61930"/>
        <dbReference type="ChEBI" id="CHEBI:83767"/>
        <dbReference type="EC" id="2.3.1.286"/>
    </reaction>
</comment>
<comment type="cofactor">
    <cofactor evidence="1">
        <name>Zn(2+)</name>
        <dbReference type="ChEBI" id="CHEBI:29105"/>
    </cofactor>
    <text evidence="1">Binds 1 zinc ion per subunit.</text>
</comment>
<comment type="subcellular location">
    <subcellularLocation>
        <location evidence="1">Cytoplasm</location>
    </subcellularLocation>
</comment>
<comment type="similarity">
    <text evidence="1">Belongs to the sirtuin family. Class U subfamily.</text>
</comment>